<sequence length="148" mass="15781">MDVILLQRIKNLGKLGDKVSVKAGYGRNFLIPQGKAVAATEANTAAFEARRAELEKQEAEVLAAAQARAEQLNEVNIVITAKAGDEGKLFGSIGTRDIADALTNAGLTVDRAEVRLPNGALRHTGEFNIAIQLHHDVVAEVLVTIVSE</sequence>
<feature type="chain" id="PRO_1000126852" description="Large ribosomal subunit protein bL9">
    <location>
        <begin position="1"/>
        <end position="148"/>
    </location>
</feature>
<dbReference type="EMBL" id="CP000863">
    <property type="protein sequence ID" value="ACC57688.1"/>
    <property type="molecule type" value="Genomic_DNA"/>
</dbReference>
<dbReference type="RefSeq" id="WP_000382591.1">
    <property type="nucleotide sequence ID" value="NZ_CP031380.1"/>
</dbReference>
<dbReference type="SMR" id="B2HUA4"/>
<dbReference type="GeneID" id="92894415"/>
<dbReference type="KEGG" id="abc:ACICU_02376"/>
<dbReference type="HOGENOM" id="CLU_078938_4_1_6"/>
<dbReference type="Proteomes" id="UP000008839">
    <property type="component" value="Chromosome"/>
</dbReference>
<dbReference type="GO" id="GO:1990904">
    <property type="term" value="C:ribonucleoprotein complex"/>
    <property type="evidence" value="ECO:0007669"/>
    <property type="project" value="UniProtKB-KW"/>
</dbReference>
<dbReference type="GO" id="GO:0005840">
    <property type="term" value="C:ribosome"/>
    <property type="evidence" value="ECO:0007669"/>
    <property type="project" value="UniProtKB-KW"/>
</dbReference>
<dbReference type="GO" id="GO:0019843">
    <property type="term" value="F:rRNA binding"/>
    <property type="evidence" value="ECO:0007669"/>
    <property type="project" value="UniProtKB-UniRule"/>
</dbReference>
<dbReference type="GO" id="GO:0003735">
    <property type="term" value="F:structural constituent of ribosome"/>
    <property type="evidence" value="ECO:0007669"/>
    <property type="project" value="InterPro"/>
</dbReference>
<dbReference type="GO" id="GO:0006412">
    <property type="term" value="P:translation"/>
    <property type="evidence" value="ECO:0007669"/>
    <property type="project" value="UniProtKB-UniRule"/>
</dbReference>
<dbReference type="Gene3D" id="3.10.430.100">
    <property type="entry name" value="Ribosomal protein L9, C-terminal domain"/>
    <property type="match status" value="1"/>
</dbReference>
<dbReference type="Gene3D" id="3.40.5.10">
    <property type="entry name" value="Ribosomal protein L9, N-terminal domain"/>
    <property type="match status" value="1"/>
</dbReference>
<dbReference type="HAMAP" id="MF_00503">
    <property type="entry name" value="Ribosomal_bL9"/>
    <property type="match status" value="1"/>
</dbReference>
<dbReference type="InterPro" id="IPR000244">
    <property type="entry name" value="Ribosomal_bL9"/>
</dbReference>
<dbReference type="InterPro" id="IPR009027">
    <property type="entry name" value="Ribosomal_bL9/RNase_H1_N"/>
</dbReference>
<dbReference type="InterPro" id="IPR020594">
    <property type="entry name" value="Ribosomal_bL9_bac/chp"/>
</dbReference>
<dbReference type="InterPro" id="IPR020069">
    <property type="entry name" value="Ribosomal_bL9_C"/>
</dbReference>
<dbReference type="InterPro" id="IPR036791">
    <property type="entry name" value="Ribosomal_bL9_C_sf"/>
</dbReference>
<dbReference type="InterPro" id="IPR020070">
    <property type="entry name" value="Ribosomal_bL9_N"/>
</dbReference>
<dbReference type="InterPro" id="IPR036935">
    <property type="entry name" value="Ribosomal_bL9_N_sf"/>
</dbReference>
<dbReference type="NCBIfam" id="TIGR00158">
    <property type="entry name" value="L9"/>
    <property type="match status" value="1"/>
</dbReference>
<dbReference type="PANTHER" id="PTHR21368">
    <property type="entry name" value="50S RIBOSOMAL PROTEIN L9"/>
    <property type="match status" value="1"/>
</dbReference>
<dbReference type="Pfam" id="PF03948">
    <property type="entry name" value="Ribosomal_L9_C"/>
    <property type="match status" value="1"/>
</dbReference>
<dbReference type="Pfam" id="PF01281">
    <property type="entry name" value="Ribosomal_L9_N"/>
    <property type="match status" value="1"/>
</dbReference>
<dbReference type="SUPFAM" id="SSF55658">
    <property type="entry name" value="L9 N-domain-like"/>
    <property type="match status" value="1"/>
</dbReference>
<dbReference type="SUPFAM" id="SSF55653">
    <property type="entry name" value="Ribosomal protein L9 C-domain"/>
    <property type="match status" value="1"/>
</dbReference>
<dbReference type="PROSITE" id="PS00651">
    <property type="entry name" value="RIBOSOMAL_L9"/>
    <property type="match status" value="1"/>
</dbReference>
<accession>B2HUA4</accession>
<evidence type="ECO:0000255" key="1">
    <source>
        <dbReference type="HAMAP-Rule" id="MF_00503"/>
    </source>
</evidence>
<evidence type="ECO:0000305" key="2"/>
<name>RL9_ACIBC</name>
<reference key="1">
    <citation type="journal article" date="2008" name="Antimicrob. Agents Chemother.">
        <title>Whole-genome pyrosequencing of an epidemic multidrug-resistant Acinetobacter baumannii strain belonging to the European clone II group.</title>
        <authorList>
            <person name="Iacono M."/>
            <person name="Villa L."/>
            <person name="Fortini D."/>
            <person name="Bordoni R."/>
            <person name="Imperi F."/>
            <person name="Bonnal R.J."/>
            <person name="Sicheritz-Ponten T."/>
            <person name="De Bellis G."/>
            <person name="Visca P."/>
            <person name="Cassone A."/>
            <person name="Carattoli A."/>
        </authorList>
    </citation>
    <scope>NUCLEOTIDE SEQUENCE [LARGE SCALE GENOMIC DNA]</scope>
    <source>
        <strain>ACICU</strain>
    </source>
</reference>
<gene>
    <name evidence="1" type="primary">rplI</name>
    <name type="ordered locus">ACICU_02376</name>
</gene>
<protein>
    <recommendedName>
        <fullName evidence="1">Large ribosomal subunit protein bL9</fullName>
    </recommendedName>
    <alternativeName>
        <fullName evidence="2">50S ribosomal protein L9</fullName>
    </alternativeName>
</protein>
<organism>
    <name type="scientific">Acinetobacter baumannii (strain ACICU)</name>
    <dbReference type="NCBI Taxonomy" id="405416"/>
    <lineage>
        <taxon>Bacteria</taxon>
        <taxon>Pseudomonadati</taxon>
        <taxon>Pseudomonadota</taxon>
        <taxon>Gammaproteobacteria</taxon>
        <taxon>Moraxellales</taxon>
        <taxon>Moraxellaceae</taxon>
        <taxon>Acinetobacter</taxon>
        <taxon>Acinetobacter calcoaceticus/baumannii complex</taxon>
    </lineage>
</organism>
<keyword id="KW-0687">Ribonucleoprotein</keyword>
<keyword id="KW-0689">Ribosomal protein</keyword>
<keyword id="KW-0694">RNA-binding</keyword>
<keyword id="KW-0699">rRNA-binding</keyword>
<proteinExistence type="inferred from homology"/>
<comment type="function">
    <text evidence="1">Binds to the 23S rRNA.</text>
</comment>
<comment type="similarity">
    <text evidence="1">Belongs to the bacterial ribosomal protein bL9 family.</text>
</comment>